<feature type="chain" id="PRO_0000046879" description="Regulatory protein MIG1">
    <location>
        <begin position="1"/>
        <end position="474"/>
    </location>
</feature>
<feature type="zinc finger region" description="C2H2-type 1" evidence="1">
    <location>
        <begin position="26"/>
        <end position="48"/>
    </location>
</feature>
<feature type="zinc finger region" description="C2H2-type 2" evidence="1">
    <location>
        <begin position="54"/>
        <end position="78"/>
    </location>
</feature>
<feature type="region of interest" description="Disordered" evidence="2">
    <location>
        <begin position="1"/>
        <end position="24"/>
    </location>
</feature>
<feature type="region of interest" description="Disordered" evidence="2">
    <location>
        <begin position="45"/>
        <end position="131"/>
    </location>
</feature>
<feature type="region of interest" description="Disordered" evidence="2">
    <location>
        <begin position="306"/>
        <end position="325"/>
    </location>
</feature>
<feature type="region of interest" description="Disordered" evidence="2">
    <location>
        <begin position="360"/>
        <end position="401"/>
    </location>
</feature>
<feature type="region of interest" description="Disordered" evidence="2">
    <location>
        <begin position="440"/>
        <end position="474"/>
    </location>
</feature>
<feature type="compositionally biased region" description="Basic and acidic residues" evidence="2">
    <location>
        <begin position="1"/>
        <end position="23"/>
    </location>
</feature>
<feature type="compositionally biased region" description="Basic and acidic residues" evidence="2">
    <location>
        <begin position="45"/>
        <end position="55"/>
    </location>
</feature>
<feature type="compositionally biased region" description="Basic and acidic residues" evidence="2">
    <location>
        <begin position="66"/>
        <end position="83"/>
    </location>
</feature>
<feature type="compositionally biased region" description="Basic and acidic residues" evidence="2">
    <location>
        <begin position="93"/>
        <end position="106"/>
    </location>
</feature>
<feature type="compositionally biased region" description="Low complexity" evidence="2">
    <location>
        <begin position="310"/>
        <end position="325"/>
    </location>
</feature>
<feature type="compositionally biased region" description="Polar residues" evidence="2">
    <location>
        <begin position="387"/>
        <end position="398"/>
    </location>
</feature>
<feature type="compositionally biased region" description="Low complexity" evidence="2">
    <location>
        <begin position="462"/>
        <end position="474"/>
    </location>
</feature>
<proteinExistence type="inferred from homology"/>
<evidence type="ECO:0000255" key="1">
    <source>
        <dbReference type="PROSITE-ProRule" id="PRU00042"/>
    </source>
</evidence>
<evidence type="ECO:0000256" key="2">
    <source>
        <dbReference type="SAM" id="MobiDB-lite"/>
    </source>
</evidence>
<evidence type="ECO:0000305" key="3"/>
<organism>
    <name type="scientific">Kluyveromyces lactis (strain ATCC 8585 / CBS 2359 / DSM 70799 / NBRC 1267 / NRRL Y-1140 / WM37)</name>
    <name type="common">Yeast</name>
    <name type="synonym">Candida sphaerica</name>
    <dbReference type="NCBI Taxonomy" id="284590"/>
    <lineage>
        <taxon>Eukaryota</taxon>
        <taxon>Fungi</taxon>
        <taxon>Dikarya</taxon>
        <taxon>Ascomycota</taxon>
        <taxon>Saccharomycotina</taxon>
        <taxon>Saccharomycetes</taxon>
        <taxon>Saccharomycetales</taxon>
        <taxon>Saccharomycetaceae</taxon>
        <taxon>Kluyveromyces</taxon>
    </lineage>
</organism>
<reference key="1">
    <citation type="journal article" date="1995" name="FEBS Lett.">
        <title>The MIG1 repressor from Kluyveromyces lactis: cloning, sequencing and functional analysis in Saccharomyces cerevisiae.</title>
        <authorList>
            <person name="Cassart J.-P."/>
            <person name="Georis I."/>
            <person name="Oestling J."/>
            <person name="Ronne H."/>
            <person name="Vandenhaute J."/>
        </authorList>
    </citation>
    <scope>NUCLEOTIDE SEQUENCE [GENOMIC DNA]</scope>
    <source>
        <strain>ATCC 8585 / CBS 2359 / DSM 70799 / NBRC 1267 / NRRL Y-1140 / WM37</strain>
    </source>
</reference>
<reference key="2">
    <citation type="journal article" date="2004" name="Nature">
        <title>Genome evolution in yeasts.</title>
        <authorList>
            <person name="Dujon B."/>
            <person name="Sherman D."/>
            <person name="Fischer G."/>
            <person name="Durrens P."/>
            <person name="Casaregola S."/>
            <person name="Lafontaine I."/>
            <person name="de Montigny J."/>
            <person name="Marck C."/>
            <person name="Neuveglise C."/>
            <person name="Talla E."/>
            <person name="Goffard N."/>
            <person name="Frangeul L."/>
            <person name="Aigle M."/>
            <person name="Anthouard V."/>
            <person name="Babour A."/>
            <person name="Barbe V."/>
            <person name="Barnay S."/>
            <person name="Blanchin S."/>
            <person name="Beckerich J.-M."/>
            <person name="Beyne E."/>
            <person name="Bleykasten C."/>
            <person name="Boisrame A."/>
            <person name="Boyer J."/>
            <person name="Cattolico L."/>
            <person name="Confanioleri F."/>
            <person name="de Daruvar A."/>
            <person name="Despons L."/>
            <person name="Fabre E."/>
            <person name="Fairhead C."/>
            <person name="Ferry-Dumazet H."/>
            <person name="Groppi A."/>
            <person name="Hantraye F."/>
            <person name="Hennequin C."/>
            <person name="Jauniaux N."/>
            <person name="Joyet P."/>
            <person name="Kachouri R."/>
            <person name="Kerrest A."/>
            <person name="Koszul R."/>
            <person name="Lemaire M."/>
            <person name="Lesur I."/>
            <person name="Ma L."/>
            <person name="Muller H."/>
            <person name="Nicaud J.-M."/>
            <person name="Nikolski M."/>
            <person name="Oztas S."/>
            <person name="Ozier-Kalogeropoulos O."/>
            <person name="Pellenz S."/>
            <person name="Potier S."/>
            <person name="Richard G.-F."/>
            <person name="Straub M.-L."/>
            <person name="Suleau A."/>
            <person name="Swennen D."/>
            <person name="Tekaia F."/>
            <person name="Wesolowski-Louvel M."/>
            <person name="Westhof E."/>
            <person name="Wirth B."/>
            <person name="Zeniou-Meyer M."/>
            <person name="Zivanovic Y."/>
            <person name="Bolotin-Fukuhara M."/>
            <person name="Thierry A."/>
            <person name="Bouchier C."/>
            <person name="Caudron B."/>
            <person name="Scarpelli C."/>
            <person name="Gaillardin C."/>
            <person name="Weissenbach J."/>
            <person name="Wincker P."/>
            <person name="Souciet J.-L."/>
        </authorList>
    </citation>
    <scope>NUCLEOTIDE SEQUENCE [LARGE SCALE GENOMIC DNA]</scope>
    <source>
        <strain>ATCC 8585 / CBS 2359 / DSM 70799 / NBRC 1267 / NRRL Y-1140 / WM37</strain>
    </source>
</reference>
<gene>
    <name type="primary">MIG1</name>
    <name type="ordered locus">KLLA0E10989g</name>
</gene>
<name>MIG1_KLULA</name>
<keyword id="KW-0119">Carbohydrate metabolism</keyword>
<keyword id="KW-0238">DNA-binding</keyword>
<keyword id="KW-0479">Metal-binding</keyword>
<keyword id="KW-0539">Nucleus</keyword>
<keyword id="KW-1185">Reference proteome</keyword>
<keyword id="KW-0677">Repeat</keyword>
<keyword id="KW-0678">Repressor</keyword>
<keyword id="KW-0804">Transcription</keyword>
<keyword id="KW-0805">Transcription regulation</keyword>
<keyword id="KW-0862">Zinc</keyword>
<keyword id="KW-0863">Zinc-finger</keyword>
<comment type="function">
    <text>Involved in glucose repression of glucose metabolism genes.</text>
</comment>
<comment type="subcellular location">
    <subcellularLocation>
        <location>Nucleus</location>
    </subcellularLocation>
</comment>
<comment type="similarity">
    <text evidence="3">Belongs to the creA/MIG C2H2-type zinc-finger protein family.</text>
</comment>
<dbReference type="EMBL" id="Z50017">
    <property type="protein sequence ID" value="CAA90320.1"/>
    <property type="molecule type" value="Genomic_DNA"/>
</dbReference>
<dbReference type="EMBL" id="CR382125">
    <property type="protein sequence ID" value="CAG99533.1"/>
    <property type="molecule type" value="Genomic_DNA"/>
</dbReference>
<dbReference type="PIR" id="S66480">
    <property type="entry name" value="S66480"/>
</dbReference>
<dbReference type="RefSeq" id="XP_454446.1">
    <property type="nucleotide sequence ID" value="XM_454446.1"/>
</dbReference>
<dbReference type="SMR" id="P50898"/>
<dbReference type="FunCoup" id="P50898">
    <property type="interactions" value="650"/>
</dbReference>
<dbReference type="STRING" id="284590.P50898"/>
<dbReference type="PaxDb" id="284590-P50898"/>
<dbReference type="KEGG" id="kla:KLLA0_E11023g"/>
<dbReference type="eggNOG" id="KOG1721">
    <property type="taxonomic scope" value="Eukaryota"/>
</dbReference>
<dbReference type="HOGENOM" id="CLU_576273_0_0_1"/>
<dbReference type="InParanoid" id="P50898"/>
<dbReference type="Proteomes" id="UP000000598">
    <property type="component" value="Chromosome E"/>
</dbReference>
<dbReference type="GO" id="GO:0005737">
    <property type="term" value="C:cytoplasm"/>
    <property type="evidence" value="ECO:0007669"/>
    <property type="project" value="TreeGrafter"/>
</dbReference>
<dbReference type="GO" id="GO:0005634">
    <property type="term" value="C:nucleus"/>
    <property type="evidence" value="ECO:0007669"/>
    <property type="project" value="UniProtKB-SubCell"/>
</dbReference>
<dbReference type="GO" id="GO:0000978">
    <property type="term" value="F:RNA polymerase II cis-regulatory region sequence-specific DNA binding"/>
    <property type="evidence" value="ECO:0007669"/>
    <property type="project" value="TreeGrafter"/>
</dbReference>
<dbReference type="GO" id="GO:0008270">
    <property type="term" value="F:zinc ion binding"/>
    <property type="evidence" value="ECO:0007669"/>
    <property type="project" value="UniProtKB-KW"/>
</dbReference>
<dbReference type="GO" id="GO:0000433">
    <property type="term" value="P:carbon catabolite repression of transcription from RNA polymerase II promoter by glucose"/>
    <property type="evidence" value="ECO:0007669"/>
    <property type="project" value="TreeGrafter"/>
</dbReference>
<dbReference type="FunFam" id="3.30.160.60:FF:000089">
    <property type="entry name" value="DNA-binding protein creA"/>
    <property type="match status" value="1"/>
</dbReference>
<dbReference type="FunFam" id="3.30.160.60:FF:000690">
    <property type="entry name" value="Zinc finger protein 354C"/>
    <property type="match status" value="1"/>
</dbReference>
<dbReference type="Gene3D" id="3.30.160.60">
    <property type="entry name" value="Classic Zinc Finger"/>
    <property type="match status" value="2"/>
</dbReference>
<dbReference type="InterPro" id="IPR051007">
    <property type="entry name" value="creA/MIG_C2H2-ZnF"/>
</dbReference>
<dbReference type="InterPro" id="IPR036236">
    <property type="entry name" value="Znf_C2H2_sf"/>
</dbReference>
<dbReference type="InterPro" id="IPR013087">
    <property type="entry name" value="Znf_C2H2_type"/>
</dbReference>
<dbReference type="PANTHER" id="PTHR47428">
    <property type="entry name" value="REGULATORY PROTEIN MIG1-RELATED"/>
    <property type="match status" value="1"/>
</dbReference>
<dbReference type="PANTHER" id="PTHR47428:SF1">
    <property type="entry name" value="REGULATORY PROTEIN MIG1-RELATED"/>
    <property type="match status" value="1"/>
</dbReference>
<dbReference type="Pfam" id="PF00096">
    <property type="entry name" value="zf-C2H2"/>
    <property type="match status" value="2"/>
</dbReference>
<dbReference type="SMART" id="SM00355">
    <property type="entry name" value="ZnF_C2H2"/>
    <property type="match status" value="2"/>
</dbReference>
<dbReference type="SUPFAM" id="SSF57667">
    <property type="entry name" value="beta-beta-alpha zinc fingers"/>
    <property type="match status" value="1"/>
</dbReference>
<dbReference type="PROSITE" id="PS00028">
    <property type="entry name" value="ZINC_FINGER_C2H2_1"/>
    <property type="match status" value="2"/>
</dbReference>
<dbReference type="PROSITE" id="PS50157">
    <property type="entry name" value="ZINC_FINGER_C2H2_2"/>
    <property type="match status" value="2"/>
</dbReference>
<accession>P50898</accession>
<sequence length="474" mass="52908">MTEAIIEKKNHKKSINDHDKDGPRPYVCPICQRGFHRLEHQTRHIRTHTGERPHACDFPGCSKRFSRSDELTRHRRIHDSDKPKGKRGRKKKSETIAREKELELQRQKQRNANDSAAVDSAGGTSANVIEPNHKLLKSTNSIKQDGSTFTEPLKSLRSKPMFDLGSDESDECGIYSVPPIRSQNNSGNIDLLLNAAKFESDKASSSFKFIDKLPLTSSSSSPSLSFTSHSINNSSSGLLLPRPASRAKLSALSSLQRMTPLSQNSESYNHSQQNLVHLHHPAPNRPLTEFVDNEYISNGLPRTRSWTNLSEQQSPSGFSSSALNSRFSSSNSLNQLIDQHSRNSSTVSISTLLKQETVISQDEDMSTEDAYGRPLKKSKAIMPIMRPSSTMPPSSGSATEGEFYDELHSRLRSMDQLPVRNSKDEKDYYFQSHFSSLLCTPTHSPPPEGLLPSLNQNKPVQLPSLRSLDLLPPK</sequence>
<protein>
    <recommendedName>
        <fullName>Regulatory protein MIG1</fullName>
    </recommendedName>
</protein>